<name>ISCA_PECAS</name>
<comment type="function">
    <text evidence="1">Is able to transfer iron-sulfur clusters to apo-ferredoxin. Multiple cycles of [2Fe2S] cluster formation and transfer are observed, suggesting that IscA acts catalytically. Recruits intracellular free iron so as to provide iron for the assembly of transient iron-sulfur cluster in IscU in the presence of IscS, L-cysteine and the thioredoxin reductase system TrxA/TrxB.</text>
</comment>
<comment type="cofactor">
    <cofactor evidence="1">
        <name>Fe cation</name>
        <dbReference type="ChEBI" id="CHEBI:24875"/>
    </cofactor>
    <text evidence="1">Binds 2 iron ions per dimer. The dimer may bind additional iron ions.</text>
</comment>
<comment type="subunit">
    <text evidence="1">Homodimer; may form tetramers and higher multimers.</text>
</comment>
<comment type="similarity">
    <text evidence="1">Belongs to the HesB/IscA family.</text>
</comment>
<keyword id="KW-0408">Iron</keyword>
<keyword id="KW-0479">Metal-binding</keyword>
<keyword id="KW-1185">Reference proteome</keyword>
<evidence type="ECO:0000255" key="1">
    <source>
        <dbReference type="HAMAP-Rule" id="MF_01429"/>
    </source>
</evidence>
<gene>
    <name evidence="1" type="primary">iscA</name>
    <name type="ordered locus">ECA3235</name>
</gene>
<feature type="chain" id="PRO_0000076996" description="Iron-binding protein IscA">
    <location>
        <begin position="1"/>
        <end position="107"/>
    </location>
</feature>
<feature type="binding site" evidence="1">
    <location>
        <position position="35"/>
    </location>
    <ligand>
        <name>Fe cation</name>
        <dbReference type="ChEBI" id="CHEBI:24875"/>
    </ligand>
</feature>
<feature type="binding site" evidence="1">
    <location>
        <position position="99"/>
    </location>
    <ligand>
        <name>Fe cation</name>
        <dbReference type="ChEBI" id="CHEBI:24875"/>
    </ligand>
</feature>
<feature type="binding site" evidence="1">
    <location>
        <position position="101"/>
    </location>
    <ligand>
        <name>Fe cation</name>
        <dbReference type="ChEBI" id="CHEBI:24875"/>
    </ligand>
</feature>
<accession>Q6D261</accession>
<protein>
    <recommendedName>
        <fullName evidence="1">Iron-binding protein IscA</fullName>
    </recommendedName>
    <alternativeName>
        <fullName evidence="1">Iron-sulfur cluster assembly protein</fullName>
    </alternativeName>
</protein>
<dbReference type="EMBL" id="BX950851">
    <property type="protein sequence ID" value="CAG76133.1"/>
    <property type="molecule type" value="Genomic_DNA"/>
</dbReference>
<dbReference type="RefSeq" id="WP_010307854.1">
    <property type="nucleotide sequence ID" value="NC_004547.2"/>
</dbReference>
<dbReference type="SMR" id="Q6D261"/>
<dbReference type="STRING" id="218491.ECA3235"/>
<dbReference type="GeneID" id="93391210"/>
<dbReference type="KEGG" id="eca:ECA3235"/>
<dbReference type="eggNOG" id="COG0316">
    <property type="taxonomic scope" value="Bacteria"/>
</dbReference>
<dbReference type="HOGENOM" id="CLU_069054_5_1_6"/>
<dbReference type="OrthoDB" id="9801228at2"/>
<dbReference type="Proteomes" id="UP000007966">
    <property type="component" value="Chromosome"/>
</dbReference>
<dbReference type="GO" id="GO:0005829">
    <property type="term" value="C:cytosol"/>
    <property type="evidence" value="ECO:0007669"/>
    <property type="project" value="TreeGrafter"/>
</dbReference>
<dbReference type="GO" id="GO:0051537">
    <property type="term" value="F:2 iron, 2 sulfur cluster binding"/>
    <property type="evidence" value="ECO:0007669"/>
    <property type="project" value="TreeGrafter"/>
</dbReference>
<dbReference type="GO" id="GO:0005506">
    <property type="term" value="F:iron ion binding"/>
    <property type="evidence" value="ECO:0007669"/>
    <property type="project" value="UniProtKB-UniRule"/>
</dbReference>
<dbReference type="GO" id="GO:0016226">
    <property type="term" value="P:iron-sulfur cluster assembly"/>
    <property type="evidence" value="ECO:0007669"/>
    <property type="project" value="UniProtKB-UniRule"/>
</dbReference>
<dbReference type="FunFam" id="2.60.300.12:FF:000001">
    <property type="entry name" value="Iron-binding protein IscA"/>
    <property type="match status" value="1"/>
</dbReference>
<dbReference type="Gene3D" id="2.60.300.12">
    <property type="entry name" value="HesB-like domain"/>
    <property type="match status" value="1"/>
</dbReference>
<dbReference type="HAMAP" id="MF_01429">
    <property type="entry name" value="Fe_S_insert_IscA"/>
    <property type="match status" value="1"/>
</dbReference>
<dbReference type="InterPro" id="IPR050322">
    <property type="entry name" value="Fe-S_cluster_asmbl/transfer"/>
</dbReference>
<dbReference type="InterPro" id="IPR000361">
    <property type="entry name" value="FeS_biogenesis"/>
</dbReference>
<dbReference type="InterPro" id="IPR016092">
    <property type="entry name" value="FeS_cluster_insertion"/>
</dbReference>
<dbReference type="InterPro" id="IPR017870">
    <property type="entry name" value="FeS_cluster_insertion_CS"/>
</dbReference>
<dbReference type="InterPro" id="IPR035903">
    <property type="entry name" value="HesB-like_dom_sf"/>
</dbReference>
<dbReference type="InterPro" id="IPR011302">
    <property type="entry name" value="IscA_proteobacteria"/>
</dbReference>
<dbReference type="NCBIfam" id="TIGR00049">
    <property type="entry name" value="iron-sulfur cluster assembly accessory protein"/>
    <property type="match status" value="1"/>
</dbReference>
<dbReference type="NCBIfam" id="TIGR02011">
    <property type="entry name" value="IscA"/>
    <property type="match status" value="1"/>
</dbReference>
<dbReference type="NCBIfam" id="NF007049">
    <property type="entry name" value="PRK09502.1"/>
    <property type="match status" value="1"/>
</dbReference>
<dbReference type="PANTHER" id="PTHR10072:SF41">
    <property type="entry name" value="IRON-SULFUR CLUSTER ASSEMBLY 1 HOMOLOG, MITOCHONDRIAL"/>
    <property type="match status" value="1"/>
</dbReference>
<dbReference type="PANTHER" id="PTHR10072">
    <property type="entry name" value="IRON-SULFUR CLUSTER ASSEMBLY PROTEIN"/>
    <property type="match status" value="1"/>
</dbReference>
<dbReference type="Pfam" id="PF01521">
    <property type="entry name" value="Fe-S_biosyn"/>
    <property type="match status" value="1"/>
</dbReference>
<dbReference type="SUPFAM" id="SSF89360">
    <property type="entry name" value="HesB-like domain"/>
    <property type="match status" value="1"/>
</dbReference>
<dbReference type="PROSITE" id="PS01152">
    <property type="entry name" value="HESB"/>
    <property type="match status" value="1"/>
</dbReference>
<organism>
    <name type="scientific">Pectobacterium atrosepticum (strain SCRI 1043 / ATCC BAA-672)</name>
    <name type="common">Erwinia carotovora subsp. atroseptica</name>
    <dbReference type="NCBI Taxonomy" id="218491"/>
    <lineage>
        <taxon>Bacteria</taxon>
        <taxon>Pseudomonadati</taxon>
        <taxon>Pseudomonadota</taxon>
        <taxon>Gammaproteobacteria</taxon>
        <taxon>Enterobacterales</taxon>
        <taxon>Pectobacteriaceae</taxon>
        <taxon>Pectobacterium</taxon>
    </lineage>
</organism>
<reference key="1">
    <citation type="journal article" date="2004" name="Proc. Natl. Acad. Sci. U.S.A.">
        <title>Genome sequence of the enterobacterial phytopathogen Erwinia carotovora subsp. atroseptica and characterization of virulence factors.</title>
        <authorList>
            <person name="Bell K.S."/>
            <person name="Sebaihia M."/>
            <person name="Pritchard L."/>
            <person name="Holden M.T.G."/>
            <person name="Hyman L.J."/>
            <person name="Holeva M.C."/>
            <person name="Thomson N.R."/>
            <person name="Bentley S.D."/>
            <person name="Churcher L.J.C."/>
            <person name="Mungall K."/>
            <person name="Atkin R."/>
            <person name="Bason N."/>
            <person name="Brooks K."/>
            <person name="Chillingworth T."/>
            <person name="Clark K."/>
            <person name="Doggett J."/>
            <person name="Fraser A."/>
            <person name="Hance Z."/>
            <person name="Hauser H."/>
            <person name="Jagels K."/>
            <person name="Moule S."/>
            <person name="Norbertczak H."/>
            <person name="Ormond D."/>
            <person name="Price C."/>
            <person name="Quail M.A."/>
            <person name="Sanders M."/>
            <person name="Walker D."/>
            <person name="Whitehead S."/>
            <person name="Salmond G.P.C."/>
            <person name="Birch P.R.J."/>
            <person name="Parkhill J."/>
            <person name="Toth I.K."/>
        </authorList>
    </citation>
    <scope>NUCLEOTIDE SEQUENCE [LARGE SCALE GENOMIC DNA]</scope>
    <source>
        <strain>SCRI 1043 / ATCC BAA-672</strain>
    </source>
</reference>
<sequence length="107" mass="11378">MSISLSESAAQRVSAFIANRGKGLGLRLGVRTSGCSGMAYVLEFVDDLNDGDTVFEDKGVKVIVDGKSLVYLDGTELDFVKEGLNEGFKFNNPNISGECGCGESFNV</sequence>
<proteinExistence type="inferred from homology"/>